<comment type="function">
    <text evidence="1">Component of the 90S pre-ribosome involved in the maturation of rRNAs. Required for early cleavages of the pre-RNAs in the 40S ribosomal subunit maturation pathway (By similarity).</text>
</comment>
<comment type="subunit">
    <text evidence="1">Associates with 90S and pre-40S pre-ribosomal particles.</text>
</comment>
<comment type="subcellular location">
    <subcellularLocation>
        <location evidence="1">Nucleus</location>
        <location evidence="1">Nucleolus</location>
    </subcellularLocation>
</comment>
<comment type="similarity">
    <text evidence="4">Belongs to the RRP36 family.</text>
</comment>
<proteinExistence type="inferred from homology"/>
<evidence type="ECO:0000250" key="1"/>
<evidence type="ECO:0000255" key="2"/>
<evidence type="ECO:0000256" key="3">
    <source>
        <dbReference type="SAM" id="MobiDB-lite"/>
    </source>
</evidence>
<evidence type="ECO:0000305" key="4"/>
<feature type="chain" id="PRO_0000397616" description="rRNA biogenesis protein rrp36">
    <location>
        <begin position="1"/>
        <end position="356"/>
    </location>
</feature>
<feature type="region of interest" description="Disordered" evidence="3">
    <location>
        <begin position="14"/>
        <end position="209"/>
    </location>
</feature>
<feature type="region of interest" description="Disordered" evidence="3">
    <location>
        <begin position="305"/>
        <end position="356"/>
    </location>
</feature>
<feature type="coiled-coil region" evidence="2">
    <location>
        <begin position="238"/>
        <end position="280"/>
    </location>
</feature>
<feature type="compositionally biased region" description="Acidic residues" evidence="3">
    <location>
        <begin position="31"/>
        <end position="50"/>
    </location>
</feature>
<feature type="compositionally biased region" description="Acidic residues" evidence="3">
    <location>
        <begin position="57"/>
        <end position="84"/>
    </location>
</feature>
<feature type="compositionally biased region" description="Basic and acidic residues" evidence="3">
    <location>
        <begin position="132"/>
        <end position="159"/>
    </location>
</feature>
<feature type="compositionally biased region" description="Polar residues" evidence="3">
    <location>
        <begin position="200"/>
        <end position="209"/>
    </location>
</feature>
<feature type="compositionally biased region" description="Basic and acidic residues" evidence="3">
    <location>
        <begin position="313"/>
        <end position="337"/>
    </location>
</feature>
<organism>
    <name type="scientific">Aspergillus fumigatus (strain ATCC MYA-4609 / CBS 101355 / FGSC A1100 / Af293)</name>
    <name type="common">Neosartorya fumigata</name>
    <dbReference type="NCBI Taxonomy" id="330879"/>
    <lineage>
        <taxon>Eukaryota</taxon>
        <taxon>Fungi</taxon>
        <taxon>Dikarya</taxon>
        <taxon>Ascomycota</taxon>
        <taxon>Pezizomycotina</taxon>
        <taxon>Eurotiomycetes</taxon>
        <taxon>Eurotiomycetidae</taxon>
        <taxon>Eurotiales</taxon>
        <taxon>Aspergillaceae</taxon>
        <taxon>Aspergillus</taxon>
        <taxon>Aspergillus subgen. Fumigati</taxon>
    </lineage>
</organism>
<accession>Q4WDF7</accession>
<gene>
    <name type="primary">rrp36</name>
    <name type="ORF">AFUA_6G04590</name>
</gene>
<protein>
    <recommendedName>
        <fullName>rRNA biogenesis protein rrp36</fullName>
    </recommendedName>
    <alternativeName>
        <fullName>Ribosomal RNA-processing protein 36</fullName>
    </alternativeName>
</protein>
<sequence length="356" mass="40206">MAVSDLLNRRVRALPDEDEELYSEASVSELESNDEEVEGSGSDISDDSSEGDYSSDSQDESDAMSHENEEEDDEDDENSDDGQDDVQASLSNISFGALAKAQASLGPTAKRKSKATQSKTDDGETPAASPLDDIRARIREAREQKREGSSKSKDLEKFSRSSKHAPMVQSSKHPVTRKRTIIEPPAALKSRDPRFDPAVRSQSGRSEASQSAYAFLDDYRAAELKEMKEKLAKTKDPRQKEALKRDIRSATDRLRTIENRRREKEVLAEHKKREKELIREGKKSTPYFLKKSELKKQALLKKYESMGSRQRVKALERRQKKLTAKERKEMPMERRGLGNDPTPYNDGGGGKRRRLA</sequence>
<keyword id="KW-0175">Coiled coil</keyword>
<keyword id="KW-0539">Nucleus</keyword>
<keyword id="KW-1185">Reference proteome</keyword>
<keyword id="KW-0687">Ribonucleoprotein</keyword>
<keyword id="KW-0690">Ribosome biogenesis</keyword>
<keyword id="KW-0698">rRNA processing</keyword>
<reference key="1">
    <citation type="journal article" date="2005" name="Nature">
        <title>Genomic sequence of the pathogenic and allergenic filamentous fungus Aspergillus fumigatus.</title>
        <authorList>
            <person name="Nierman W.C."/>
            <person name="Pain A."/>
            <person name="Anderson M.J."/>
            <person name="Wortman J.R."/>
            <person name="Kim H.S."/>
            <person name="Arroyo J."/>
            <person name="Berriman M."/>
            <person name="Abe K."/>
            <person name="Archer D.B."/>
            <person name="Bermejo C."/>
            <person name="Bennett J.W."/>
            <person name="Bowyer P."/>
            <person name="Chen D."/>
            <person name="Collins M."/>
            <person name="Coulsen R."/>
            <person name="Davies R."/>
            <person name="Dyer P.S."/>
            <person name="Farman M.L."/>
            <person name="Fedorova N."/>
            <person name="Fedorova N.D."/>
            <person name="Feldblyum T.V."/>
            <person name="Fischer R."/>
            <person name="Fosker N."/>
            <person name="Fraser A."/>
            <person name="Garcia J.L."/>
            <person name="Garcia M.J."/>
            <person name="Goble A."/>
            <person name="Goldman G.H."/>
            <person name="Gomi K."/>
            <person name="Griffith-Jones S."/>
            <person name="Gwilliam R."/>
            <person name="Haas B.J."/>
            <person name="Haas H."/>
            <person name="Harris D.E."/>
            <person name="Horiuchi H."/>
            <person name="Huang J."/>
            <person name="Humphray S."/>
            <person name="Jimenez J."/>
            <person name="Keller N."/>
            <person name="Khouri H."/>
            <person name="Kitamoto K."/>
            <person name="Kobayashi T."/>
            <person name="Konzack S."/>
            <person name="Kulkarni R."/>
            <person name="Kumagai T."/>
            <person name="Lafton A."/>
            <person name="Latge J.-P."/>
            <person name="Li W."/>
            <person name="Lord A."/>
            <person name="Lu C."/>
            <person name="Majoros W.H."/>
            <person name="May G.S."/>
            <person name="Miller B.L."/>
            <person name="Mohamoud Y."/>
            <person name="Molina M."/>
            <person name="Monod M."/>
            <person name="Mouyna I."/>
            <person name="Mulligan S."/>
            <person name="Murphy L.D."/>
            <person name="O'Neil S."/>
            <person name="Paulsen I."/>
            <person name="Penalva M.A."/>
            <person name="Pertea M."/>
            <person name="Price C."/>
            <person name="Pritchard B.L."/>
            <person name="Quail M.A."/>
            <person name="Rabbinowitsch E."/>
            <person name="Rawlins N."/>
            <person name="Rajandream M.A."/>
            <person name="Reichard U."/>
            <person name="Renauld H."/>
            <person name="Robson G.D."/>
            <person name="Rodriguez de Cordoba S."/>
            <person name="Rodriguez-Pena J.M."/>
            <person name="Ronning C.M."/>
            <person name="Rutter S."/>
            <person name="Salzberg S.L."/>
            <person name="Sanchez M."/>
            <person name="Sanchez-Ferrero J.C."/>
            <person name="Saunders D."/>
            <person name="Seeger K."/>
            <person name="Squares R."/>
            <person name="Squares S."/>
            <person name="Takeuchi M."/>
            <person name="Tekaia F."/>
            <person name="Turner G."/>
            <person name="Vazquez de Aldana C.R."/>
            <person name="Weidman J."/>
            <person name="White O."/>
            <person name="Woodward J.R."/>
            <person name="Yu J.-H."/>
            <person name="Fraser C.M."/>
            <person name="Galagan J.E."/>
            <person name="Asai K."/>
            <person name="Machida M."/>
            <person name="Hall N."/>
            <person name="Barrell B.G."/>
            <person name="Denning D.W."/>
        </authorList>
    </citation>
    <scope>NUCLEOTIDE SEQUENCE [LARGE SCALE GENOMIC DNA]</scope>
    <source>
        <strain>ATCC MYA-4609 / CBS 101355 / FGSC A1100 / Af293</strain>
    </source>
</reference>
<name>RRP36_ASPFU</name>
<dbReference type="EMBL" id="AAHF01000012">
    <property type="protein sequence ID" value="EAL85581.1"/>
    <property type="molecule type" value="Genomic_DNA"/>
</dbReference>
<dbReference type="RefSeq" id="XP_747619.1">
    <property type="nucleotide sequence ID" value="XM_742526.1"/>
</dbReference>
<dbReference type="SMR" id="Q4WDF7"/>
<dbReference type="FunCoup" id="Q4WDF7">
    <property type="interactions" value="541"/>
</dbReference>
<dbReference type="STRING" id="330879.Q4WDF7"/>
<dbReference type="EnsemblFungi" id="EAL85581">
    <property type="protein sequence ID" value="EAL85581"/>
    <property type="gene ID" value="AFUA_6G04590"/>
</dbReference>
<dbReference type="GeneID" id="3505219"/>
<dbReference type="KEGG" id="afm:AFUA_6G04590"/>
<dbReference type="VEuPathDB" id="FungiDB:Afu6g04590"/>
<dbReference type="eggNOG" id="KOG3190">
    <property type="taxonomic scope" value="Eukaryota"/>
</dbReference>
<dbReference type="HOGENOM" id="CLU_048802_0_0_1"/>
<dbReference type="InParanoid" id="Q4WDF7"/>
<dbReference type="OMA" id="ERKEMPW"/>
<dbReference type="OrthoDB" id="448446at2759"/>
<dbReference type="Proteomes" id="UP000002530">
    <property type="component" value="Chromosome 6"/>
</dbReference>
<dbReference type="GO" id="GO:0030686">
    <property type="term" value="C:90S preribosome"/>
    <property type="evidence" value="ECO:0000318"/>
    <property type="project" value="GO_Central"/>
</dbReference>
<dbReference type="GO" id="GO:0005730">
    <property type="term" value="C:nucleolus"/>
    <property type="evidence" value="ECO:0000318"/>
    <property type="project" value="GO_Central"/>
</dbReference>
<dbReference type="GO" id="GO:0000462">
    <property type="term" value="P:maturation of SSU-rRNA from tricistronic rRNA transcript (SSU-rRNA, 5.8S rRNA, LSU-rRNA)"/>
    <property type="evidence" value="ECO:0000318"/>
    <property type="project" value="GO_Central"/>
</dbReference>
<dbReference type="InterPro" id="IPR009292">
    <property type="entry name" value="RRP36"/>
</dbReference>
<dbReference type="PANTHER" id="PTHR21738">
    <property type="entry name" value="RIBOSOMAL RNA PROCESSING PROTEIN 36 HOMOLOG"/>
    <property type="match status" value="1"/>
</dbReference>
<dbReference type="PANTHER" id="PTHR21738:SF0">
    <property type="entry name" value="RIBOSOMAL RNA PROCESSING PROTEIN 36 HOMOLOG"/>
    <property type="match status" value="1"/>
</dbReference>
<dbReference type="Pfam" id="PF06102">
    <property type="entry name" value="RRP36"/>
    <property type="match status" value="1"/>
</dbReference>